<protein>
    <recommendedName>
        <fullName>Thiamine precursor transporter HmpT</fullName>
    </recommendedName>
    <alternativeName>
        <fullName>Thiamine precursor ECF transporter S component HmpT</fullName>
    </alternativeName>
</protein>
<evidence type="ECO:0000255" key="1"/>
<evidence type="ECO:0000269" key="2">
    <source>
    </source>
</evidence>
<evidence type="ECO:0000305" key="3">
    <source>
    </source>
</evidence>
<proteinExistence type="evidence at protein level"/>
<organism>
    <name type="scientific">Lactococcus lactis subsp. cremoris (strain MG1363)</name>
    <dbReference type="NCBI Taxonomy" id="416870"/>
    <lineage>
        <taxon>Bacteria</taxon>
        <taxon>Bacillati</taxon>
        <taxon>Bacillota</taxon>
        <taxon>Bacilli</taxon>
        <taxon>Lactobacillales</taxon>
        <taxon>Streptococcaceae</taxon>
        <taxon>Lactococcus</taxon>
        <taxon>Lactococcus cremoris subsp. cremoris</taxon>
    </lineage>
</organism>
<dbReference type="EMBL" id="AM406671">
    <property type="protein sequence ID" value="CAL97068.1"/>
    <property type="molecule type" value="Genomic_DNA"/>
</dbReference>
<dbReference type="RefSeq" id="WP_011834505.1">
    <property type="nucleotide sequence ID" value="NC_009004.1"/>
</dbReference>
<dbReference type="SMR" id="A2RIH3"/>
<dbReference type="STRING" id="416870.llmg_0464"/>
<dbReference type="KEGG" id="llm:llmg_0464"/>
<dbReference type="eggNOG" id="COG4720">
    <property type="taxonomic scope" value="Bacteria"/>
</dbReference>
<dbReference type="HOGENOM" id="CLU_084705_1_1_9"/>
<dbReference type="PhylomeDB" id="A2RIH3"/>
<dbReference type="Proteomes" id="UP000000364">
    <property type="component" value="Chromosome"/>
</dbReference>
<dbReference type="GO" id="GO:0005886">
    <property type="term" value="C:plasma membrane"/>
    <property type="evidence" value="ECO:0000314"/>
    <property type="project" value="UniProtKB"/>
</dbReference>
<dbReference type="Gene3D" id="1.10.1760.20">
    <property type="match status" value="1"/>
</dbReference>
<dbReference type="InterPro" id="IPR009825">
    <property type="entry name" value="ECF_substrate-spec-like"/>
</dbReference>
<dbReference type="PANTHER" id="PTHR37815">
    <property type="entry name" value="UPF0397 PROTEIN BC_2624-RELATED"/>
    <property type="match status" value="1"/>
</dbReference>
<dbReference type="PANTHER" id="PTHR37815:SF3">
    <property type="entry name" value="UPF0397 PROTEIN SPR0429"/>
    <property type="match status" value="1"/>
</dbReference>
<dbReference type="Pfam" id="PF07155">
    <property type="entry name" value="ECF-ribofla_trS"/>
    <property type="match status" value="1"/>
</dbReference>
<reference key="1">
    <citation type="journal article" date="2007" name="J. Bacteriol.">
        <title>The complete genome sequence of the lactic acid bacterial paradigm Lactococcus lactis subsp. cremoris MG1363.</title>
        <authorList>
            <person name="Wegmann U."/>
            <person name="O'Connell-Motherway M."/>
            <person name="Zomer A."/>
            <person name="Buist G."/>
            <person name="Shearman C."/>
            <person name="Canchaya C."/>
            <person name="Ventura M."/>
            <person name="Goesmann A."/>
            <person name="Gasson M.J."/>
            <person name="Kuipers O.P."/>
            <person name="van Sinderen D."/>
            <person name="Kok J."/>
        </authorList>
    </citation>
    <scope>NUCLEOTIDE SEQUENCE [LARGE SCALE GENOMIC DNA]</scope>
    <source>
        <strain>MG1363</strain>
    </source>
</reference>
<reference key="2">
    <citation type="journal article" date="2011" name="J. Biol. Chem.">
        <title>Quaternary structure and functional unit of energy coupling factor (ECF)-type transporters.</title>
        <authorList>
            <person name="ter Beek J."/>
            <person name="Duurkens R.H."/>
            <person name="Erkens G.B."/>
            <person name="Slotboom D.J."/>
        </authorList>
    </citation>
    <scope>SUBUNIT</scope>
    <scope>SUBCELLULAR LOCATION</scope>
    <scope>EXPRESSION IN E.COLI</scope>
    <scope>FUNCTION</scope>
    <source>
        <strain>MG1363</strain>
    </source>
</reference>
<sequence>MKLMDNKNIKKLTLLAIWTALTFVLGRLFTFPIPGSAGNILTLLDVGIYTAVFLFGKREAAIIGGFAAFLLDLTAGFSNYMFFSLIIHGGQGYLAGLTRYKWLNFLLSLLVMVGGYFIVGGLMYGWGSAIAGLWVNIVQVIVGFVLAKVLSPLIERTGILNGFRKA</sequence>
<feature type="chain" id="PRO_0000409010" description="Thiamine precursor transporter HmpT">
    <location>
        <begin position="1"/>
        <end position="166"/>
    </location>
</feature>
<feature type="transmembrane region" description="Helical" evidence="1">
    <location>
        <begin position="14"/>
        <end position="34"/>
    </location>
</feature>
<feature type="transmembrane region" description="Helical" evidence="1">
    <location>
        <begin position="35"/>
        <end position="55"/>
    </location>
</feature>
<feature type="transmembrane region" description="Helical" evidence="1">
    <location>
        <begin position="62"/>
        <end position="82"/>
    </location>
</feature>
<feature type="transmembrane region" description="Helical" evidence="1">
    <location>
        <begin position="105"/>
        <end position="125"/>
    </location>
</feature>
<feature type="transmembrane region" description="Helical" evidence="1">
    <location>
        <begin position="126"/>
        <end position="146"/>
    </location>
</feature>
<gene>
    <name type="primary">hmpT</name>
    <name type="ordered locus">llmg_0464</name>
</gene>
<comment type="function">
    <text evidence="2">Probably a thiamine precursor-binding protein that interacts with the energy-coupling factor (ECF) ABC-transporter complex. Unlike classic ABC transporters this ECF transporter provides the energy necessary to transport a number of different substrates. The substrates themselves are bound by transmembrane, not extracytoplasmic soluble proteins.</text>
</comment>
<comment type="subunit">
    <text evidence="2">In E.coli forms a stable energy-coupling factor (ECF) transporter complex composed of 2 membrane-embedded substrate-binding protein (S component), 2 ATP-binding proteins (A and A' components) and 2 transmembrane proteins (T component), probably with a stoichiometry of 2:1:1:2. May be able to interact with more than 1 S component at a time.</text>
</comment>
<comment type="subcellular location">
    <subcellularLocation>
        <location evidence="3">Cell membrane</location>
        <topology evidence="3">Multi-pass membrane protein</topology>
    </subcellularLocation>
</comment>
<keyword id="KW-1003">Cell membrane</keyword>
<keyword id="KW-0472">Membrane</keyword>
<keyword id="KW-0812">Transmembrane</keyword>
<keyword id="KW-1133">Transmembrane helix</keyword>
<keyword id="KW-0813">Transport</keyword>
<accession>A2RIH3</accession>
<name>HMPT_LACLM</name>